<proteinExistence type="evidence at protein level"/>
<keyword id="KW-0903">Direct protein sequencing</keyword>
<keyword id="KW-1015">Disulfide bond</keyword>
<keyword id="KW-0646">Protease inhibitor</keyword>
<keyword id="KW-0873">Pyrrolidone carboxylic acid</keyword>
<keyword id="KW-0964">Secreted</keyword>
<keyword id="KW-0722">Serine protease inhibitor</keyword>
<keyword id="KW-0732">Signal</keyword>
<feature type="signal peptide" evidence="4">
    <location>
        <begin position="1"/>
        <end position="24"/>
    </location>
</feature>
<feature type="chain" id="PRO_0000155444" description="Kunitz-type serine protease inhibitor 1">
    <location>
        <begin position="25"/>
        <end position="85"/>
    </location>
</feature>
<feature type="propeptide" id="PRO_0000376930">
    <location>
        <begin position="86"/>
        <end position="90"/>
    </location>
</feature>
<feature type="domain" description="BPTI/Kunitz inhibitor" evidence="2">
    <location>
        <begin position="31"/>
        <end position="81"/>
    </location>
</feature>
<feature type="site" description="Reactive bond for trypsin" evidence="1">
    <location>
        <begin position="41"/>
        <end position="42"/>
    </location>
</feature>
<feature type="modified residue" description="Pyrrolidone carboxylic acid" evidence="4">
    <location>
        <position position="25"/>
    </location>
</feature>
<feature type="disulfide bond" evidence="2 4">
    <location>
        <begin position="31"/>
        <end position="81"/>
    </location>
</feature>
<feature type="disulfide bond" evidence="2 4">
    <location>
        <begin position="40"/>
        <end position="64"/>
    </location>
</feature>
<feature type="disulfide bond" evidence="2 4">
    <location>
        <begin position="56"/>
        <end position="77"/>
    </location>
</feature>
<accession>P00991</accession>
<accession>Q6XPY8</accession>
<comment type="function">
    <text evidence="3 4">Serine protease inhibitor that principally inhibits trypsin (Ki=0.34 nM). Also inhibits alpha-chymotrypsin (Ki=270 nM), plasmin, plasma and pancreatic kallikrein.</text>
</comment>
<comment type="subcellular location">
    <subcellularLocation>
        <location>Secreted</location>
    </subcellularLocation>
</comment>
<comment type="tissue specificity">
    <text>Expressed by the venom gland.</text>
</comment>
<comment type="similarity">
    <text evidence="5">Belongs to the venom Kunitz-type family.</text>
</comment>
<organism>
    <name type="scientific">Vipera ammodytes ammodytes</name>
    <name type="common">Western sand viper</name>
    <dbReference type="NCBI Taxonomy" id="8705"/>
    <lineage>
        <taxon>Eukaryota</taxon>
        <taxon>Metazoa</taxon>
        <taxon>Chordata</taxon>
        <taxon>Craniata</taxon>
        <taxon>Vertebrata</taxon>
        <taxon>Euteleostomi</taxon>
        <taxon>Lepidosauria</taxon>
        <taxon>Squamata</taxon>
        <taxon>Bifurcata</taxon>
        <taxon>Unidentata</taxon>
        <taxon>Episquamata</taxon>
        <taxon>Toxicofera</taxon>
        <taxon>Serpentes</taxon>
        <taxon>Colubroidea</taxon>
        <taxon>Viperidae</taxon>
        <taxon>Viperinae</taxon>
        <taxon>Vipera</taxon>
    </lineage>
</organism>
<evidence type="ECO:0000250" key="1"/>
<evidence type="ECO:0000255" key="2">
    <source>
        <dbReference type="PROSITE-ProRule" id="PRU00031"/>
    </source>
</evidence>
<evidence type="ECO:0000269" key="3">
    <source>
    </source>
</evidence>
<evidence type="ECO:0000269" key="4">
    <source>
    </source>
</evidence>
<evidence type="ECO:0000305" key="5"/>
<dbReference type="EMBL" id="AY217781">
    <property type="protein sequence ID" value="AAP04484.1"/>
    <property type="molecule type" value="mRNA"/>
</dbReference>
<dbReference type="PIR" id="A01222">
    <property type="entry name" value="TIVIT1"/>
</dbReference>
<dbReference type="SMR" id="P00991"/>
<dbReference type="MEROPS" id="I02.062"/>
<dbReference type="GO" id="GO:0005615">
    <property type="term" value="C:extracellular space"/>
    <property type="evidence" value="ECO:0007669"/>
    <property type="project" value="TreeGrafter"/>
</dbReference>
<dbReference type="GO" id="GO:0004867">
    <property type="term" value="F:serine-type endopeptidase inhibitor activity"/>
    <property type="evidence" value="ECO:0007669"/>
    <property type="project" value="UniProtKB-KW"/>
</dbReference>
<dbReference type="CDD" id="cd22608">
    <property type="entry name" value="Kunitz_PPTI-like"/>
    <property type="match status" value="1"/>
</dbReference>
<dbReference type="FunFam" id="4.10.410.10:FF:000021">
    <property type="entry name" value="Serine protease inhibitor, putative"/>
    <property type="match status" value="1"/>
</dbReference>
<dbReference type="Gene3D" id="4.10.410.10">
    <property type="entry name" value="Pancreatic trypsin inhibitor Kunitz domain"/>
    <property type="match status" value="1"/>
</dbReference>
<dbReference type="InterPro" id="IPR002223">
    <property type="entry name" value="Kunitz_BPTI"/>
</dbReference>
<dbReference type="InterPro" id="IPR036880">
    <property type="entry name" value="Kunitz_BPTI_sf"/>
</dbReference>
<dbReference type="InterPro" id="IPR020901">
    <property type="entry name" value="Prtase_inh_Kunz-CS"/>
</dbReference>
<dbReference type="InterPro" id="IPR050098">
    <property type="entry name" value="TFPI/VKTCI-like"/>
</dbReference>
<dbReference type="PANTHER" id="PTHR10083:SF374">
    <property type="entry name" value="BPTI_KUNITZ INHIBITOR DOMAIN-CONTAINING PROTEIN"/>
    <property type="match status" value="1"/>
</dbReference>
<dbReference type="PANTHER" id="PTHR10083">
    <property type="entry name" value="KUNITZ-TYPE PROTEASE INHIBITOR-RELATED"/>
    <property type="match status" value="1"/>
</dbReference>
<dbReference type="Pfam" id="PF00014">
    <property type="entry name" value="Kunitz_BPTI"/>
    <property type="match status" value="1"/>
</dbReference>
<dbReference type="PRINTS" id="PR00759">
    <property type="entry name" value="BASICPTASE"/>
</dbReference>
<dbReference type="SMART" id="SM00131">
    <property type="entry name" value="KU"/>
    <property type="match status" value="1"/>
</dbReference>
<dbReference type="SUPFAM" id="SSF57362">
    <property type="entry name" value="BPTI-like"/>
    <property type="match status" value="1"/>
</dbReference>
<dbReference type="PROSITE" id="PS00280">
    <property type="entry name" value="BPTI_KUNITZ_1"/>
    <property type="match status" value="1"/>
</dbReference>
<dbReference type="PROSITE" id="PS50279">
    <property type="entry name" value="BPTI_KUNITZ_2"/>
    <property type="match status" value="1"/>
</dbReference>
<sequence>MSSGGLLLLLGLLTLWAELTPVSGQDHPKFCYLPADPGRCKAHIPRFYYDSASNKCNKFIYGGCPGNANNFKTWDECRQTCGASAMGRPT</sequence>
<reference key="1">
    <citation type="journal article" date="2003" name="FEBS Lett.">
        <title>Adaptive evolution in the snake venom Kunitz/BPTI protein family.</title>
        <authorList>
            <person name="Zupunski V."/>
            <person name="Kordis D."/>
            <person name="Gubensek F."/>
        </authorList>
    </citation>
    <scope>NUCLEOTIDE SEQUENCE [MRNA]</scope>
    <source>
        <tissue>Venom gland</tissue>
    </source>
</reference>
<reference key="2">
    <citation type="journal article" date="1983" name="Biochim. Biophys. Acta">
        <title>The primary structure of Vipera ammodytes venom trypsin inhibitor I.</title>
        <authorList>
            <person name="Ritonja A."/>
            <person name="Meloun B."/>
            <person name="Gubensek F."/>
        </authorList>
    </citation>
    <scope>PROTEIN SEQUENCE OF 25-85</scope>
    <scope>FUNCTION</scope>
    <scope>DISULFIDE BONDS</scope>
    <scope>PYROGLUTAMATE FORMATION AT GLN-25</scope>
    <source>
        <tissue>Venom</tissue>
    </source>
</reference>
<reference key="3">
    <citation type="journal article" date="1983" name="Eur. J. Biochem.">
        <title>Serine proteinase inhibitors from Vipera ammodytes venom. Isolation and kinetic studies.</title>
        <authorList>
            <person name="Ritonja A."/>
            <person name="Turk V."/>
            <person name="Gubensek F."/>
        </authorList>
    </citation>
    <scope>AMINO-ACID COMPOSITION</scope>
    <scope>FUNCTION</scope>
    <source>
        <tissue>Venom</tissue>
    </source>
</reference>
<protein>
    <recommendedName>
        <fullName>Kunitz-type serine protease inhibitor 1</fullName>
    </recommendedName>
    <alternativeName>
        <fullName>Venom basic protease inhibitor 1</fullName>
    </alternativeName>
    <alternativeName>
        <fullName>Venom trypsin inhibitor I</fullName>
        <shortName>cVamTi</shortName>
    </alternativeName>
</protein>
<name>VKT1_VIPAA</name>